<dbReference type="EMBL" id="M96433">
    <property type="protein sequence ID" value="AAA16466.1"/>
    <property type="molecule type" value="Unassigned_DNA"/>
</dbReference>
<dbReference type="EMBL" id="AY305378">
    <property type="protein sequence ID" value="AAP85762.1"/>
    <property type="molecule type" value="Genomic_DNA"/>
</dbReference>
<dbReference type="PIR" id="F43255">
    <property type="entry name" value="F43255"/>
</dbReference>
<dbReference type="RefSeq" id="WP_011153931.1">
    <property type="nucleotide sequence ID" value="NC_005241.1"/>
</dbReference>
<dbReference type="SMR" id="P31899"/>
<dbReference type="KEGG" id="reh:PHG006"/>
<dbReference type="PATRIC" id="fig|381666.6.peg.5"/>
<dbReference type="eggNOG" id="COG0298">
    <property type="taxonomic scope" value="Bacteria"/>
</dbReference>
<dbReference type="HOGENOM" id="CLU_2104361_0_0_4"/>
<dbReference type="OrthoDB" id="9806017at2"/>
<dbReference type="Proteomes" id="UP000008210">
    <property type="component" value="Plasmid megaplasmid pHG1"/>
</dbReference>
<dbReference type="GO" id="GO:1902670">
    <property type="term" value="F:carbon dioxide binding"/>
    <property type="evidence" value="ECO:0007669"/>
    <property type="project" value="TreeGrafter"/>
</dbReference>
<dbReference type="GO" id="GO:0005506">
    <property type="term" value="F:iron ion binding"/>
    <property type="evidence" value="ECO:0007669"/>
    <property type="project" value="TreeGrafter"/>
</dbReference>
<dbReference type="GO" id="GO:0051604">
    <property type="term" value="P:protein maturation"/>
    <property type="evidence" value="ECO:0007669"/>
    <property type="project" value="TreeGrafter"/>
</dbReference>
<dbReference type="Gene3D" id="2.30.30.140">
    <property type="match status" value="1"/>
</dbReference>
<dbReference type="InterPro" id="IPR019812">
    <property type="entry name" value="Hydgase_assmbl_chp_CS"/>
</dbReference>
<dbReference type="InterPro" id="IPR001109">
    <property type="entry name" value="Hydrogenase_HupF/HypC"/>
</dbReference>
<dbReference type="NCBIfam" id="TIGR00074">
    <property type="entry name" value="hypC_hupF"/>
    <property type="match status" value="1"/>
</dbReference>
<dbReference type="PANTHER" id="PTHR35177">
    <property type="entry name" value="HYDROGENASE MATURATION FACTOR HYBG"/>
    <property type="match status" value="1"/>
</dbReference>
<dbReference type="PANTHER" id="PTHR35177:SF2">
    <property type="entry name" value="HYDROGENASE MATURATION FACTOR HYBG"/>
    <property type="match status" value="1"/>
</dbReference>
<dbReference type="Pfam" id="PF01455">
    <property type="entry name" value="HupF_HypC"/>
    <property type="match status" value="1"/>
</dbReference>
<dbReference type="PRINTS" id="PR00445">
    <property type="entry name" value="HUPFHYPC"/>
</dbReference>
<dbReference type="SUPFAM" id="SSF159127">
    <property type="entry name" value="HupF/HypC-like"/>
    <property type="match status" value="1"/>
</dbReference>
<dbReference type="PROSITE" id="PS01097">
    <property type="entry name" value="HUPF_HYPC"/>
    <property type="match status" value="1"/>
</dbReference>
<keyword id="KW-0614">Plasmid</keyword>
<keyword id="KW-1185">Reference proteome</keyword>
<gene>
    <name type="primary">hoxL</name>
    <name type="ordered locus">PHG006</name>
</gene>
<sequence length="107" mass="11641">MCIGIPMQVMAIEPGYAVCAGRGERRRVSSALVGDCQQGDWLLVFLDSARERIDALRAHEIDATLDMLQAALLGLDASEAQPRFELPSAMAREDLAVLSNSRDSSSY</sequence>
<protein>
    <recommendedName>
        <fullName>Hydrogenase expression/formation protein HoxL</fullName>
    </recommendedName>
</protein>
<accession>P31899</accession>
<accession>Q7WXU3</accession>
<name>HOXL_CUPNH</name>
<geneLocation type="plasmid">
    <name>megaplasmid pHG1</name>
</geneLocation>
<comment type="miscellaneous">
    <text>Possibly a metalloprotein.</text>
</comment>
<comment type="similarity">
    <text evidence="1">Belongs to the HupF/HypC family.</text>
</comment>
<feature type="chain" id="PRO_0000201387" description="Hydrogenase expression/formation protein HoxL">
    <location>
        <begin position="1"/>
        <end position="107"/>
    </location>
</feature>
<feature type="sequence conflict" description="In Ref. 1; AAA16466." evidence="1" ref="1">
    <original>LLGLDASEAQPRFELPSAMAR</original>
    <variation>CWVLTHPKRNHVLNCHRRWP</variation>
    <location>
        <begin position="72"/>
        <end position="92"/>
    </location>
</feature>
<evidence type="ECO:0000305" key="1"/>
<organism>
    <name type="scientific">Cupriavidus necator (strain ATCC 17699 / DSM 428 / KCTC 22496 / NCIMB 10442 / H16 / Stanier 337)</name>
    <name type="common">Ralstonia eutropha</name>
    <dbReference type="NCBI Taxonomy" id="381666"/>
    <lineage>
        <taxon>Bacteria</taxon>
        <taxon>Pseudomonadati</taxon>
        <taxon>Pseudomonadota</taxon>
        <taxon>Betaproteobacteria</taxon>
        <taxon>Burkholderiales</taxon>
        <taxon>Burkholderiaceae</taxon>
        <taxon>Cupriavidus</taxon>
    </lineage>
</organism>
<proteinExistence type="inferred from homology"/>
<reference key="1">
    <citation type="journal article" date="1992" name="J. Bacteriol.">
        <title>A gene complex coding for the membrane-bound hydrogenase of Alcaligenes eutrophus H16.</title>
        <authorList>
            <person name="Kortlueke C."/>
            <person name="Horstmann K."/>
            <person name="Schwartz E."/>
            <person name="Rohde M."/>
            <person name="Binsack R."/>
            <person name="Friedrich B."/>
        </authorList>
    </citation>
    <scope>NUCLEOTIDE SEQUENCE [GENOMIC DNA]</scope>
</reference>
<reference key="2">
    <citation type="journal article" date="2003" name="J. Mol. Biol.">
        <title>Complete nucleotide sequence of pHG1: a Ralstonia eutropha H16 megaplasmid encoding key enzymes of H(2)-based lithoautotrophy and anaerobiosis.</title>
        <authorList>
            <person name="Schwartz E."/>
            <person name="Henne A."/>
            <person name="Cramm R."/>
            <person name="Eitinger T."/>
            <person name="Friedrich B."/>
            <person name="Gottschalk G."/>
        </authorList>
    </citation>
    <scope>NUCLEOTIDE SEQUENCE [LARGE SCALE GENOMIC DNA]</scope>
    <source>
        <strain>ATCC 17699 / DSM 428 / KCTC 22496 / NCIMB 10442 / H16 / Stanier 337</strain>
    </source>
</reference>